<accession>A2C482</accession>
<proteinExistence type="inferred from homology"/>
<comment type="function">
    <text evidence="1">Involved in the biosynthesis of branched-chain amino acids (BCAA). Catalyzes an alkyl-migration followed by a ketol-acid reduction of (S)-2-acetolactate (S2AL) to yield (R)-2,3-dihydroxy-isovalerate. In the isomerase reaction, S2AL is rearranged via a Mg-dependent methyl migration to produce 3-hydroxy-3-methyl-2-ketobutyrate (HMKB). In the reductase reaction, this 2-ketoacid undergoes a metal-dependent reduction by NADPH to yield (R)-2,3-dihydroxy-isovalerate.</text>
</comment>
<comment type="catalytic activity">
    <reaction evidence="1">
        <text>(2R)-2,3-dihydroxy-3-methylbutanoate + NADP(+) = (2S)-2-acetolactate + NADPH + H(+)</text>
        <dbReference type="Rhea" id="RHEA:22068"/>
        <dbReference type="ChEBI" id="CHEBI:15378"/>
        <dbReference type="ChEBI" id="CHEBI:49072"/>
        <dbReference type="ChEBI" id="CHEBI:57783"/>
        <dbReference type="ChEBI" id="CHEBI:58349"/>
        <dbReference type="ChEBI" id="CHEBI:58476"/>
        <dbReference type="EC" id="1.1.1.86"/>
    </reaction>
</comment>
<comment type="catalytic activity">
    <reaction evidence="1">
        <text>(2R,3R)-2,3-dihydroxy-3-methylpentanoate + NADP(+) = (S)-2-ethyl-2-hydroxy-3-oxobutanoate + NADPH + H(+)</text>
        <dbReference type="Rhea" id="RHEA:13493"/>
        <dbReference type="ChEBI" id="CHEBI:15378"/>
        <dbReference type="ChEBI" id="CHEBI:49256"/>
        <dbReference type="ChEBI" id="CHEBI:49258"/>
        <dbReference type="ChEBI" id="CHEBI:57783"/>
        <dbReference type="ChEBI" id="CHEBI:58349"/>
        <dbReference type="EC" id="1.1.1.86"/>
    </reaction>
</comment>
<comment type="cofactor">
    <cofactor evidence="1">
        <name>Mg(2+)</name>
        <dbReference type="ChEBI" id="CHEBI:18420"/>
    </cofactor>
    <text evidence="1">Binds 2 magnesium ions per subunit.</text>
</comment>
<comment type="pathway">
    <text evidence="1">Amino-acid biosynthesis; L-isoleucine biosynthesis; L-isoleucine from 2-oxobutanoate: step 2/4.</text>
</comment>
<comment type="pathway">
    <text evidence="1">Amino-acid biosynthesis; L-valine biosynthesis; L-valine from pyruvate: step 2/4.</text>
</comment>
<comment type="similarity">
    <text evidence="1">Belongs to the ketol-acid reductoisomerase family.</text>
</comment>
<sequence>MAKLFYDSDADLGLLQDKTVAIIGYGSQGHAHALNLKDSGIKVVVGLYEGSRSASKAKSDGLEVLSVAEASERADWIMILLPDEFQKDVYSKEIAPHLKAGKILSFAHGFNIRFELIKPPEFVDVVMIAPKGPGHTVRWEYQNGQGVPALFAIEQDASGNARALAMAYAKGIGGTRAGILETNFKEETETDLFGEQAVLCGGLSELVKAGFETLVEAGYQPELAYFECLHEVKLIVDLMVKGGLTAMRDSISNTAEYGDYVSGPRLITKETKEEMKNILADIQDGTFAKNFVKECDAGKPEMKRIRQKDSELPIEKVGKTLRSMFSWLKSD</sequence>
<feature type="chain" id="PRO_1000050554" description="Ketol-acid reductoisomerase (NADP(+))">
    <location>
        <begin position="1"/>
        <end position="331"/>
    </location>
</feature>
<feature type="domain" description="KARI N-terminal Rossmann" evidence="2">
    <location>
        <begin position="2"/>
        <end position="182"/>
    </location>
</feature>
<feature type="domain" description="KARI C-terminal knotted" evidence="3">
    <location>
        <begin position="183"/>
        <end position="328"/>
    </location>
</feature>
<feature type="active site" evidence="1">
    <location>
        <position position="108"/>
    </location>
</feature>
<feature type="binding site" evidence="1">
    <location>
        <begin position="25"/>
        <end position="28"/>
    </location>
    <ligand>
        <name>NADP(+)</name>
        <dbReference type="ChEBI" id="CHEBI:58349"/>
    </ligand>
</feature>
<feature type="binding site" evidence="1">
    <location>
        <position position="51"/>
    </location>
    <ligand>
        <name>NADP(+)</name>
        <dbReference type="ChEBI" id="CHEBI:58349"/>
    </ligand>
</feature>
<feature type="binding site" evidence="1">
    <location>
        <position position="53"/>
    </location>
    <ligand>
        <name>NADP(+)</name>
        <dbReference type="ChEBI" id="CHEBI:58349"/>
    </ligand>
</feature>
<feature type="binding site" evidence="1">
    <location>
        <begin position="83"/>
        <end position="86"/>
    </location>
    <ligand>
        <name>NADP(+)</name>
        <dbReference type="ChEBI" id="CHEBI:58349"/>
    </ligand>
</feature>
<feature type="binding site" evidence="1">
    <location>
        <position position="134"/>
    </location>
    <ligand>
        <name>NADP(+)</name>
        <dbReference type="ChEBI" id="CHEBI:58349"/>
    </ligand>
</feature>
<feature type="binding site" evidence="1">
    <location>
        <position position="191"/>
    </location>
    <ligand>
        <name>Mg(2+)</name>
        <dbReference type="ChEBI" id="CHEBI:18420"/>
        <label>1</label>
    </ligand>
</feature>
<feature type="binding site" evidence="1">
    <location>
        <position position="191"/>
    </location>
    <ligand>
        <name>Mg(2+)</name>
        <dbReference type="ChEBI" id="CHEBI:18420"/>
        <label>2</label>
    </ligand>
</feature>
<feature type="binding site" evidence="1">
    <location>
        <position position="195"/>
    </location>
    <ligand>
        <name>Mg(2+)</name>
        <dbReference type="ChEBI" id="CHEBI:18420"/>
        <label>1</label>
    </ligand>
</feature>
<feature type="binding site" evidence="1">
    <location>
        <position position="227"/>
    </location>
    <ligand>
        <name>Mg(2+)</name>
        <dbReference type="ChEBI" id="CHEBI:18420"/>
        <label>2</label>
    </ligand>
</feature>
<feature type="binding site" evidence="1">
    <location>
        <position position="231"/>
    </location>
    <ligand>
        <name>Mg(2+)</name>
        <dbReference type="ChEBI" id="CHEBI:18420"/>
        <label>2</label>
    </ligand>
</feature>
<feature type="binding site" evidence="1">
    <location>
        <position position="252"/>
    </location>
    <ligand>
        <name>substrate</name>
    </ligand>
</feature>
<dbReference type="EC" id="1.1.1.86" evidence="1"/>
<dbReference type="EMBL" id="CP000553">
    <property type="protein sequence ID" value="ABM76292.1"/>
    <property type="molecule type" value="Genomic_DNA"/>
</dbReference>
<dbReference type="RefSeq" id="WP_011824291.1">
    <property type="nucleotide sequence ID" value="NC_008819.1"/>
</dbReference>
<dbReference type="SMR" id="A2C482"/>
<dbReference type="KEGG" id="pme:NATL1_17361"/>
<dbReference type="eggNOG" id="COG0059">
    <property type="taxonomic scope" value="Bacteria"/>
</dbReference>
<dbReference type="HOGENOM" id="CLU_033821_0_1_3"/>
<dbReference type="UniPathway" id="UPA00047">
    <property type="reaction ID" value="UER00056"/>
</dbReference>
<dbReference type="UniPathway" id="UPA00049">
    <property type="reaction ID" value="UER00060"/>
</dbReference>
<dbReference type="Proteomes" id="UP000002592">
    <property type="component" value="Chromosome"/>
</dbReference>
<dbReference type="GO" id="GO:0005829">
    <property type="term" value="C:cytosol"/>
    <property type="evidence" value="ECO:0007669"/>
    <property type="project" value="TreeGrafter"/>
</dbReference>
<dbReference type="GO" id="GO:0004455">
    <property type="term" value="F:ketol-acid reductoisomerase activity"/>
    <property type="evidence" value="ECO:0007669"/>
    <property type="project" value="UniProtKB-UniRule"/>
</dbReference>
<dbReference type="GO" id="GO:0000287">
    <property type="term" value="F:magnesium ion binding"/>
    <property type="evidence" value="ECO:0007669"/>
    <property type="project" value="UniProtKB-UniRule"/>
</dbReference>
<dbReference type="GO" id="GO:0050661">
    <property type="term" value="F:NADP binding"/>
    <property type="evidence" value="ECO:0007669"/>
    <property type="project" value="InterPro"/>
</dbReference>
<dbReference type="GO" id="GO:0009097">
    <property type="term" value="P:isoleucine biosynthetic process"/>
    <property type="evidence" value="ECO:0007669"/>
    <property type="project" value="UniProtKB-UniRule"/>
</dbReference>
<dbReference type="GO" id="GO:0009099">
    <property type="term" value="P:L-valine biosynthetic process"/>
    <property type="evidence" value="ECO:0007669"/>
    <property type="project" value="UniProtKB-UniRule"/>
</dbReference>
<dbReference type="FunFam" id="3.40.50.720:FF:000023">
    <property type="entry name" value="Ketol-acid reductoisomerase (NADP(+))"/>
    <property type="match status" value="1"/>
</dbReference>
<dbReference type="Gene3D" id="6.10.240.10">
    <property type="match status" value="1"/>
</dbReference>
<dbReference type="Gene3D" id="3.40.50.720">
    <property type="entry name" value="NAD(P)-binding Rossmann-like Domain"/>
    <property type="match status" value="1"/>
</dbReference>
<dbReference type="HAMAP" id="MF_00435">
    <property type="entry name" value="IlvC"/>
    <property type="match status" value="1"/>
</dbReference>
<dbReference type="InterPro" id="IPR008927">
    <property type="entry name" value="6-PGluconate_DH-like_C_sf"/>
</dbReference>
<dbReference type="InterPro" id="IPR013023">
    <property type="entry name" value="KARI"/>
</dbReference>
<dbReference type="InterPro" id="IPR000506">
    <property type="entry name" value="KARI_C"/>
</dbReference>
<dbReference type="InterPro" id="IPR013116">
    <property type="entry name" value="KARI_N"/>
</dbReference>
<dbReference type="InterPro" id="IPR014359">
    <property type="entry name" value="KARI_prok"/>
</dbReference>
<dbReference type="InterPro" id="IPR036291">
    <property type="entry name" value="NAD(P)-bd_dom_sf"/>
</dbReference>
<dbReference type="NCBIfam" id="TIGR00465">
    <property type="entry name" value="ilvC"/>
    <property type="match status" value="1"/>
</dbReference>
<dbReference type="NCBIfam" id="NF004017">
    <property type="entry name" value="PRK05479.1"/>
    <property type="match status" value="1"/>
</dbReference>
<dbReference type="NCBIfam" id="NF009940">
    <property type="entry name" value="PRK13403.1"/>
    <property type="match status" value="1"/>
</dbReference>
<dbReference type="PANTHER" id="PTHR21371">
    <property type="entry name" value="KETOL-ACID REDUCTOISOMERASE, MITOCHONDRIAL"/>
    <property type="match status" value="1"/>
</dbReference>
<dbReference type="PANTHER" id="PTHR21371:SF1">
    <property type="entry name" value="KETOL-ACID REDUCTOISOMERASE, MITOCHONDRIAL"/>
    <property type="match status" value="1"/>
</dbReference>
<dbReference type="Pfam" id="PF01450">
    <property type="entry name" value="KARI_C"/>
    <property type="match status" value="1"/>
</dbReference>
<dbReference type="Pfam" id="PF07991">
    <property type="entry name" value="KARI_N"/>
    <property type="match status" value="1"/>
</dbReference>
<dbReference type="PIRSF" id="PIRSF000116">
    <property type="entry name" value="IlvC_gammaproteo"/>
    <property type="match status" value="1"/>
</dbReference>
<dbReference type="SUPFAM" id="SSF48179">
    <property type="entry name" value="6-phosphogluconate dehydrogenase C-terminal domain-like"/>
    <property type="match status" value="1"/>
</dbReference>
<dbReference type="SUPFAM" id="SSF51735">
    <property type="entry name" value="NAD(P)-binding Rossmann-fold domains"/>
    <property type="match status" value="1"/>
</dbReference>
<dbReference type="PROSITE" id="PS51851">
    <property type="entry name" value="KARI_C"/>
    <property type="match status" value="1"/>
</dbReference>
<dbReference type="PROSITE" id="PS51850">
    <property type="entry name" value="KARI_N"/>
    <property type="match status" value="1"/>
</dbReference>
<keyword id="KW-0028">Amino-acid biosynthesis</keyword>
<keyword id="KW-0100">Branched-chain amino acid biosynthesis</keyword>
<keyword id="KW-0460">Magnesium</keyword>
<keyword id="KW-0479">Metal-binding</keyword>
<keyword id="KW-0521">NADP</keyword>
<keyword id="KW-0560">Oxidoreductase</keyword>
<protein>
    <recommendedName>
        <fullName evidence="1">Ketol-acid reductoisomerase (NADP(+))</fullName>
        <shortName evidence="1">KARI</shortName>
        <ecNumber evidence="1">1.1.1.86</ecNumber>
    </recommendedName>
    <alternativeName>
        <fullName evidence="1">Acetohydroxy-acid isomeroreductase</fullName>
        <shortName evidence="1">AHIR</shortName>
    </alternativeName>
    <alternativeName>
        <fullName evidence="1">Alpha-keto-beta-hydroxylacyl reductoisomerase</fullName>
    </alternativeName>
    <alternativeName>
        <fullName evidence="1">Ketol-acid reductoisomerase type 1</fullName>
    </alternativeName>
    <alternativeName>
        <fullName evidence="1">Ketol-acid reductoisomerase type I</fullName>
    </alternativeName>
</protein>
<gene>
    <name evidence="1" type="primary">ilvC</name>
    <name type="ordered locus">NATL1_17361</name>
</gene>
<organism>
    <name type="scientific">Prochlorococcus marinus (strain NATL1A)</name>
    <dbReference type="NCBI Taxonomy" id="167555"/>
    <lineage>
        <taxon>Bacteria</taxon>
        <taxon>Bacillati</taxon>
        <taxon>Cyanobacteriota</taxon>
        <taxon>Cyanophyceae</taxon>
        <taxon>Synechococcales</taxon>
        <taxon>Prochlorococcaceae</taxon>
        <taxon>Prochlorococcus</taxon>
    </lineage>
</organism>
<name>ILVC_PROM1</name>
<reference key="1">
    <citation type="journal article" date="2007" name="PLoS Genet.">
        <title>Patterns and implications of gene gain and loss in the evolution of Prochlorococcus.</title>
        <authorList>
            <person name="Kettler G.C."/>
            <person name="Martiny A.C."/>
            <person name="Huang K."/>
            <person name="Zucker J."/>
            <person name="Coleman M.L."/>
            <person name="Rodrigue S."/>
            <person name="Chen F."/>
            <person name="Lapidus A."/>
            <person name="Ferriera S."/>
            <person name="Johnson J."/>
            <person name="Steglich C."/>
            <person name="Church G.M."/>
            <person name="Richardson P."/>
            <person name="Chisholm S.W."/>
        </authorList>
    </citation>
    <scope>NUCLEOTIDE SEQUENCE [LARGE SCALE GENOMIC DNA]</scope>
    <source>
        <strain>NATL1A</strain>
    </source>
</reference>
<evidence type="ECO:0000255" key="1">
    <source>
        <dbReference type="HAMAP-Rule" id="MF_00435"/>
    </source>
</evidence>
<evidence type="ECO:0000255" key="2">
    <source>
        <dbReference type="PROSITE-ProRule" id="PRU01197"/>
    </source>
</evidence>
<evidence type="ECO:0000255" key="3">
    <source>
        <dbReference type="PROSITE-ProRule" id="PRU01198"/>
    </source>
</evidence>